<feature type="chain" id="PRO_1000018317" description="Tryptophan synthase beta chain">
    <location>
        <begin position="1"/>
        <end position="403"/>
    </location>
</feature>
<feature type="modified residue" description="N6-(pyridoxal phosphate)lysine" evidence="1">
    <location>
        <position position="93"/>
    </location>
</feature>
<name>TRPB_ACIAD</name>
<proteinExistence type="inferred from homology"/>
<reference key="1">
    <citation type="journal article" date="2004" name="Nucleic Acids Res.">
        <title>Unique features revealed by the genome sequence of Acinetobacter sp. ADP1, a versatile and naturally transformation competent bacterium.</title>
        <authorList>
            <person name="Barbe V."/>
            <person name="Vallenet D."/>
            <person name="Fonknechten N."/>
            <person name="Kreimeyer A."/>
            <person name="Oztas S."/>
            <person name="Labarre L."/>
            <person name="Cruveiller S."/>
            <person name="Robert C."/>
            <person name="Duprat S."/>
            <person name="Wincker P."/>
            <person name="Ornston L.N."/>
            <person name="Weissenbach J."/>
            <person name="Marliere P."/>
            <person name="Cohen G.N."/>
            <person name="Medigue C."/>
        </authorList>
    </citation>
    <scope>NUCLEOTIDE SEQUENCE [LARGE SCALE GENOMIC DNA]</scope>
    <source>
        <strain>ATCC 33305 / BD413 / ADP1</strain>
    </source>
</reference>
<keyword id="KW-0028">Amino-acid biosynthesis</keyword>
<keyword id="KW-0057">Aromatic amino acid biosynthesis</keyword>
<keyword id="KW-0456">Lyase</keyword>
<keyword id="KW-0663">Pyridoxal phosphate</keyword>
<keyword id="KW-0822">Tryptophan biosynthesis</keyword>
<comment type="function">
    <text evidence="1">The beta subunit is responsible for the synthesis of L-tryptophan from indole and L-serine.</text>
</comment>
<comment type="catalytic activity">
    <reaction evidence="1">
        <text>(1S,2R)-1-C-(indol-3-yl)glycerol 3-phosphate + L-serine = D-glyceraldehyde 3-phosphate + L-tryptophan + H2O</text>
        <dbReference type="Rhea" id="RHEA:10532"/>
        <dbReference type="ChEBI" id="CHEBI:15377"/>
        <dbReference type="ChEBI" id="CHEBI:33384"/>
        <dbReference type="ChEBI" id="CHEBI:57912"/>
        <dbReference type="ChEBI" id="CHEBI:58866"/>
        <dbReference type="ChEBI" id="CHEBI:59776"/>
        <dbReference type="EC" id="4.2.1.20"/>
    </reaction>
</comment>
<comment type="cofactor">
    <cofactor evidence="1">
        <name>pyridoxal 5'-phosphate</name>
        <dbReference type="ChEBI" id="CHEBI:597326"/>
    </cofactor>
</comment>
<comment type="pathway">
    <text evidence="1">Amino-acid biosynthesis; L-tryptophan biosynthesis; L-tryptophan from chorismate: step 5/5.</text>
</comment>
<comment type="subunit">
    <text evidence="1">Tetramer of two alpha and two beta chains.</text>
</comment>
<comment type="similarity">
    <text evidence="1">Belongs to the TrpB family.</text>
</comment>
<accession>Q6FEF1</accession>
<gene>
    <name evidence="1" type="primary">trpB</name>
    <name type="ordered locus">ACIAD0636</name>
</gene>
<protein>
    <recommendedName>
        <fullName evidence="1">Tryptophan synthase beta chain</fullName>
        <ecNumber evidence="1">4.2.1.20</ecNumber>
    </recommendedName>
</protein>
<organism>
    <name type="scientific">Acinetobacter baylyi (strain ATCC 33305 / BD413 / ADP1)</name>
    <dbReference type="NCBI Taxonomy" id="62977"/>
    <lineage>
        <taxon>Bacteria</taxon>
        <taxon>Pseudomonadati</taxon>
        <taxon>Pseudomonadota</taxon>
        <taxon>Gammaproteobacteria</taxon>
        <taxon>Moraxellales</taxon>
        <taxon>Moraxellaceae</taxon>
        <taxon>Acinetobacter</taxon>
    </lineage>
</organism>
<dbReference type="EC" id="4.2.1.20" evidence="1"/>
<dbReference type="EMBL" id="CR543861">
    <property type="protein sequence ID" value="CAG67557.1"/>
    <property type="molecule type" value="Genomic_DNA"/>
</dbReference>
<dbReference type="SMR" id="Q6FEF1"/>
<dbReference type="STRING" id="202950.GCA_001485005_00869"/>
<dbReference type="KEGG" id="aci:ACIAD0636"/>
<dbReference type="eggNOG" id="COG0133">
    <property type="taxonomic scope" value="Bacteria"/>
</dbReference>
<dbReference type="HOGENOM" id="CLU_016734_3_1_6"/>
<dbReference type="UniPathway" id="UPA00035">
    <property type="reaction ID" value="UER00044"/>
</dbReference>
<dbReference type="Proteomes" id="UP000000430">
    <property type="component" value="Chromosome"/>
</dbReference>
<dbReference type="GO" id="GO:0005737">
    <property type="term" value="C:cytoplasm"/>
    <property type="evidence" value="ECO:0007669"/>
    <property type="project" value="TreeGrafter"/>
</dbReference>
<dbReference type="GO" id="GO:0004834">
    <property type="term" value="F:tryptophan synthase activity"/>
    <property type="evidence" value="ECO:0007669"/>
    <property type="project" value="UniProtKB-UniRule"/>
</dbReference>
<dbReference type="CDD" id="cd06446">
    <property type="entry name" value="Trp-synth_B"/>
    <property type="match status" value="1"/>
</dbReference>
<dbReference type="FunFam" id="3.40.50.1100:FF:000001">
    <property type="entry name" value="Tryptophan synthase beta chain"/>
    <property type="match status" value="1"/>
</dbReference>
<dbReference type="FunFam" id="3.40.50.1100:FF:000004">
    <property type="entry name" value="Tryptophan synthase beta chain"/>
    <property type="match status" value="1"/>
</dbReference>
<dbReference type="Gene3D" id="3.40.50.1100">
    <property type="match status" value="2"/>
</dbReference>
<dbReference type="HAMAP" id="MF_00133">
    <property type="entry name" value="Trp_synth_beta"/>
    <property type="match status" value="1"/>
</dbReference>
<dbReference type="InterPro" id="IPR006653">
    <property type="entry name" value="Trp_synth_b_CS"/>
</dbReference>
<dbReference type="InterPro" id="IPR006654">
    <property type="entry name" value="Trp_synth_beta"/>
</dbReference>
<dbReference type="InterPro" id="IPR023026">
    <property type="entry name" value="Trp_synth_beta/beta-like"/>
</dbReference>
<dbReference type="InterPro" id="IPR001926">
    <property type="entry name" value="TrpB-like_PALP"/>
</dbReference>
<dbReference type="InterPro" id="IPR036052">
    <property type="entry name" value="TrpB-like_PALP_sf"/>
</dbReference>
<dbReference type="NCBIfam" id="TIGR00263">
    <property type="entry name" value="trpB"/>
    <property type="match status" value="1"/>
</dbReference>
<dbReference type="PANTHER" id="PTHR48077:SF3">
    <property type="entry name" value="TRYPTOPHAN SYNTHASE"/>
    <property type="match status" value="1"/>
</dbReference>
<dbReference type="PANTHER" id="PTHR48077">
    <property type="entry name" value="TRYPTOPHAN SYNTHASE-RELATED"/>
    <property type="match status" value="1"/>
</dbReference>
<dbReference type="Pfam" id="PF00291">
    <property type="entry name" value="PALP"/>
    <property type="match status" value="1"/>
</dbReference>
<dbReference type="PIRSF" id="PIRSF001413">
    <property type="entry name" value="Trp_syn_beta"/>
    <property type="match status" value="1"/>
</dbReference>
<dbReference type="SUPFAM" id="SSF53686">
    <property type="entry name" value="Tryptophan synthase beta subunit-like PLP-dependent enzymes"/>
    <property type="match status" value="1"/>
</dbReference>
<dbReference type="PROSITE" id="PS00168">
    <property type="entry name" value="TRP_SYNTHASE_BETA"/>
    <property type="match status" value="1"/>
</dbReference>
<evidence type="ECO:0000255" key="1">
    <source>
        <dbReference type="HAMAP-Rule" id="MF_00133"/>
    </source>
</evidence>
<sequence>MIDYTQYPDARGHFGIHGGRFVSETLMAALEDLENLYNRMKNDEQFLAEFDRDLAYYVGRPSPLYYAERWSKKLGGAQIYLKREDLNHTGSHKVNNTIGQALLAKLSGKKRIIAETGAGQHGVATATIAARLGLECVVFMGAEDVKRQAMNVYRMRLLGATVIPVQSGSKTLKDAMNEAMRDWVTNVDSTYYVIGTVAGPHPYPQLVRDFQSIIGREARRQIQEQAGRLPDALVACVGGGSNAIGLFYPFLNDQDVKMYGVEAAGHGIETGKHSAPLNAGHVGVLHGNRTYLMSDPQGQIIETHSISAGLDYPGVGPEHSFLKDMHRVEYVPIDDNEALQGFRDLTRIEGIIPAIESAHAMAYVTKLAPTMDKDQIIIANVSGRGDKDLMTVARIDGIEMVEM</sequence>